<evidence type="ECO:0000255" key="1">
    <source>
        <dbReference type="HAMAP-Rule" id="MF_01380"/>
    </source>
</evidence>
<name>ERPA_POLSJ</name>
<gene>
    <name evidence="1" type="primary">erpA</name>
    <name type="ordered locus">Bpro_4109</name>
</gene>
<comment type="function">
    <text evidence="1">Required for insertion of 4Fe-4S clusters.</text>
</comment>
<comment type="cofactor">
    <cofactor evidence="1">
        <name>iron-sulfur cluster</name>
        <dbReference type="ChEBI" id="CHEBI:30408"/>
    </cofactor>
    <text evidence="1">Binds 1 iron-sulfur cluster per subunit.</text>
</comment>
<comment type="subunit">
    <text evidence="1">Homodimer.</text>
</comment>
<comment type="similarity">
    <text evidence="1">Belongs to the HesB/IscA family.</text>
</comment>
<organism>
    <name type="scientific">Polaromonas sp. (strain JS666 / ATCC BAA-500)</name>
    <dbReference type="NCBI Taxonomy" id="296591"/>
    <lineage>
        <taxon>Bacteria</taxon>
        <taxon>Pseudomonadati</taxon>
        <taxon>Pseudomonadota</taxon>
        <taxon>Betaproteobacteria</taxon>
        <taxon>Burkholderiales</taxon>
        <taxon>Comamonadaceae</taxon>
        <taxon>Polaromonas</taxon>
    </lineage>
</organism>
<feature type="chain" id="PRO_0000311520" description="Putative iron-sulfur cluster insertion protein ErpA">
    <location>
        <begin position="1"/>
        <end position="121"/>
    </location>
</feature>
<feature type="binding site" evidence="1">
    <location>
        <position position="49"/>
    </location>
    <ligand>
        <name>iron-sulfur cluster</name>
        <dbReference type="ChEBI" id="CHEBI:30408"/>
    </ligand>
</feature>
<feature type="binding site" evidence="1">
    <location>
        <position position="113"/>
    </location>
    <ligand>
        <name>iron-sulfur cluster</name>
        <dbReference type="ChEBI" id="CHEBI:30408"/>
    </ligand>
</feature>
<feature type="binding site" evidence="1">
    <location>
        <position position="115"/>
    </location>
    <ligand>
        <name>iron-sulfur cluster</name>
        <dbReference type="ChEBI" id="CHEBI:30408"/>
    </ligand>
</feature>
<proteinExistence type="inferred from homology"/>
<dbReference type="EMBL" id="CP000316">
    <property type="protein sequence ID" value="ABE46002.1"/>
    <property type="molecule type" value="Genomic_DNA"/>
</dbReference>
<dbReference type="RefSeq" id="WP_011484992.1">
    <property type="nucleotide sequence ID" value="NC_007948.1"/>
</dbReference>
<dbReference type="SMR" id="Q124P0"/>
<dbReference type="STRING" id="296591.Bpro_4109"/>
<dbReference type="KEGG" id="pol:Bpro_4109"/>
<dbReference type="eggNOG" id="COG0316">
    <property type="taxonomic scope" value="Bacteria"/>
</dbReference>
<dbReference type="HOGENOM" id="CLU_069054_5_3_4"/>
<dbReference type="OrthoDB" id="9801228at2"/>
<dbReference type="Proteomes" id="UP000001983">
    <property type="component" value="Chromosome"/>
</dbReference>
<dbReference type="GO" id="GO:0051537">
    <property type="term" value="F:2 iron, 2 sulfur cluster binding"/>
    <property type="evidence" value="ECO:0007669"/>
    <property type="project" value="UniProtKB-ARBA"/>
</dbReference>
<dbReference type="GO" id="GO:0051539">
    <property type="term" value="F:4 iron, 4 sulfur cluster binding"/>
    <property type="evidence" value="ECO:0007669"/>
    <property type="project" value="TreeGrafter"/>
</dbReference>
<dbReference type="GO" id="GO:0005506">
    <property type="term" value="F:iron ion binding"/>
    <property type="evidence" value="ECO:0007669"/>
    <property type="project" value="UniProtKB-UniRule"/>
</dbReference>
<dbReference type="GO" id="GO:0016226">
    <property type="term" value="P:iron-sulfur cluster assembly"/>
    <property type="evidence" value="ECO:0007669"/>
    <property type="project" value="UniProtKB-UniRule"/>
</dbReference>
<dbReference type="FunFam" id="2.60.300.12:FF:000002">
    <property type="entry name" value="Iron-sulfur cluster insertion protein ErpA"/>
    <property type="match status" value="1"/>
</dbReference>
<dbReference type="Gene3D" id="2.60.300.12">
    <property type="entry name" value="HesB-like domain"/>
    <property type="match status" value="1"/>
</dbReference>
<dbReference type="HAMAP" id="MF_01380">
    <property type="entry name" value="Fe_S_insert_ErpA"/>
    <property type="match status" value="1"/>
</dbReference>
<dbReference type="InterPro" id="IPR000361">
    <property type="entry name" value="FeS_biogenesis"/>
</dbReference>
<dbReference type="InterPro" id="IPR016092">
    <property type="entry name" value="FeS_cluster_insertion"/>
</dbReference>
<dbReference type="InterPro" id="IPR017870">
    <property type="entry name" value="FeS_cluster_insertion_CS"/>
</dbReference>
<dbReference type="InterPro" id="IPR023063">
    <property type="entry name" value="FeS_cluster_insertion_RrpA"/>
</dbReference>
<dbReference type="InterPro" id="IPR035903">
    <property type="entry name" value="HesB-like_dom_sf"/>
</dbReference>
<dbReference type="NCBIfam" id="TIGR00049">
    <property type="entry name" value="iron-sulfur cluster assembly accessory protein"/>
    <property type="match status" value="1"/>
</dbReference>
<dbReference type="NCBIfam" id="NF010147">
    <property type="entry name" value="PRK13623.1"/>
    <property type="match status" value="1"/>
</dbReference>
<dbReference type="PANTHER" id="PTHR43011">
    <property type="entry name" value="IRON-SULFUR CLUSTER ASSEMBLY 2 HOMOLOG, MITOCHONDRIAL"/>
    <property type="match status" value="1"/>
</dbReference>
<dbReference type="PANTHER" id="PTHR43011:SF1">
    <property type="entry name" value="IRON-SULFUR CLUSTER ASSEMBLY 2 HOMOLOG, MITOCHONDRIAL"/>
    <property type="match status" value="1"/>
</dbReference>
<dbReference type="Pfam" id="PF01521">
    <property type="entry name" value="Fe-S_biosyn"/>
    <property type="match status" value="1"/>
</dbReference>
<dbReference type="SUPFAM" id="SSF89360">
    <property type="entry name" value="HesB-like domain"/>
    <property type="match status" value="1"/>
</dbReference>
<dbReference type="PROSITE" id="PS01152">
    <property type="entry name" value="HESB"/>
    <property type="match status" value="1"/>
</dbReference>
<protein>
    <recommendedName>
        <fullName evidence="1">Putative iron-sulfur cluster insertion protein ErpA</fullName>
    </recommendedName>
</protein>
<keyword id="KW-0408">Iron</keyword>
<keyword id="KW-0411">Iron-sulfur</keyword>
<keyword id="KW-0479">Metal-binding</keyword>
<keyword id="KW-1185">Reference proteome</keyword>
<sequence>MSAVAEIIQTEMPAPFVFTDSAAAKVAELIAEEGNPDLKLRVFVQGGGCSGFQYGFTFDEITNEDDTTMTKNGVSLLIDAMSYQYLVGAEIDYKDDLEGAQFVIKNPNATSTCGCGSSFSA</sequence>
<accession>Q124P0</accession>
<reference key="1">
    <citation type="journal article" date="2008" name="Appl. Environ. Microbiol.">
        <title>The genome of Polaromonas sp. strain JS666: insights into the evolution of a hydrocarbon- and xenobiotic-degrading bacterium, and features of relevance to biotechnology.</title>
        <authorList>
            <person name="Mattes T.E."/>
            <person name="Alexander A.K."/>
            <person name="Richardson P.M."/>
            <person name="Munk A.C."/>
            <person name="Han C.S."/>
            <person name="Stothard P."/>
            <person name="Coleman N.V."/>
        </authorList>
    </citation>
    <scope>NUCLEOTIDE SEQUENCE [LARGE SCALE GENOMIC DNA]</scope>
    <source>
        <strain>JS666 / ATCC BAA-500</strain>
    </source>
</reference>